<reference key="1">
    <citation type="journal article" date="2007" name="Nat. Biotechnol.">
        <title>Complete genome sequence of the fish pathogen Flavobacterium psychrophilum.</title>
        <authorList>
            <person name="Duchaud E."/>
            <person name="Boussaha M."/>
            <person name="Loux V."/>
            <person name="Bernardet J.-F."/>
            <person name="Michel C."/>
            <person name="Kerouault B."/>
            <person name="Mondot S."/>
            <person name="Nicolas P."/>
            <person name="Bossy R."/>
            <person name="Caron C."/>
            <person name="Bessieres P."/>
            <person name="Gibrat J.-F."/>
            <person name="Claverol S."/>
            <person name="Dumetz F."/>
            <person name="Le Henaff M."/>
            <person name="Benmansour A."/>
        </authorList>
    </citation>
    <scope>NUCLEOTIDE SEQUENCE [LARGE SCALE GENOMIC DNA]</scope>
    <source>
        <strain>ATCC 49511 / DSM 21280 / CIP 103535 / JIP02/86</strain>
    </source>
</reference>
<name>SYP_FLAPJ</name>
<feature type="chain" id="PRO_1000069191" description="Proline--tRNA ligase">
    <location>
        <begin position="1"/>
        <end position="492"/>
    </location>
</feature>
<keyword id="KW-0030">Aminoacyl-tRNA synthetase</keyword>
<keyword id="KW-0067">ATP-binding</keyword>
<keyword id="KW-0963">Cytoplasm</keyword>
<keyword id="KW-0436">Ligase</keyword>
<keyword id="KW-0547">Nucleotide-binding</keyword>
<keyword id="KW-0648">Protein biosynthesis</keyword>
<keyword id="KW-1185">Reference proteome</keyword>
<accession>A6GZF3</accession>
<organism>
    <name type="scientific">Flavobacterium psychrophilum (strain ATCC 49511 / DSM 21280 / CIP 103535 / JIP02/86)</name>
    <dbReference type="NCBI Taxonomy" id="402612"/>
    <lineage>
        <taxon>Bacteria</taxon>
        <taxon>Pseudomonadati</taxon>
        <taxon>Bacteroidota</taxon>
        <taxon>Flavobacteriia</taxon>
        <taxon>Flavobacteriales</taxon>
        <taxon>Flavobacteriaceae</taxon>
        <taxon>Flavobacterium</taxon>
    </lineage>
</organism>
<sequence>MSKNLTTRAEDYSKWYNELVVRADLAENSGVRGCMVIKPYGYAIWEKMQAELDRMFKETGHSNAYFPLFVPKSMFEAEEKNAEGFAKECAIVTHYRLKNDPDKPGKLMVDPNAKLEEELIVRPTSEAIIWSTYKGWIQSYRDLPLLINQWANVVRWEMRTRLFLRTAEFLWQEGHTAHATRKEAIEESEKMMNVYADFAQNFMAIPVIKGLKTETERFAGAEETYCIEALMQDGKALQAGTSHFLGQNFAKAFDVKFANAEGKQEHVWGTSWGVSTRLMGALVMTHSDDNGLVLPPNLAPIQVVIVPIFKTDEEFEKISALANDLISQFKKLNISVKFDNRTTQKPGFKFAEWELKGVPVRIAIGPKDLENETFEIARRDTLTKEVKPKEGIVKYISDLLAQIQSDLFSKALQYRDTHITEVSDFEEFKKVLENKGGFISAHWDGTPETEEKIKELTKATIRCIALNRKEEIGNCMFTGKQSVGRVLFAKAY</sequence>
<gene>
    <name evidence="1" type="primary">proS</name>
    <name type="ordered locus">FP1400</name>
</gene>
<dbReference type="EC" id="6.1.1.15" evidence="1"/>
<dbReference type="EMBL" id="AM398681">
    <property type="protein sequence ID" value="CAL43476.1"/>
    <property type="molecule type" value="Genomic_DNA"/>
</dbReference>
<dbReference type="RefSeq" id="WP_011963521.1">
    <property type="nucleotide sequence ID" value="NC_009613.3"/>
</dbReference>
<dbReference type="RefSeq" id="YP_001296285.1">
    <property type="nucleotide sequence ID" value="NC_009613.3"/>
</dbReference>
<dbReference type="SMR" id="A6GZF3"/>
<dbReference type="STRING" id="402612.FP1400"/>
<dbReference type="EnsemblBacteria" id="CAL43476">
    <property type="protein sequence ID" value="CAL43476"/>
    <property type="gene ID" value="FP1400"/>
</dbReference>
<dbReference type="GeneID" id="66552856"/>
<dbReference type="KEGG" id="fps:FP1400"/>
<dbReference type="PATRIC" id="fig|402612.5.peg.1411"/>
<dbReference type="eggNOG" id="COG0442">
    <property type="taxonomic scope" value="Bacteria"/>
</dbReference>
<dbReference type="HOGENOM" id="CLU_001882_4_2_10"/>
<dbReference type="OrthoDB" id="9809052at2"/>
<dbReference type="Proteomes" id="UP000006394">
    <property type="component" value="Chromosome"/>
</dbReference>
<dbReference type="GO" id="GO:0017101">
    <property type="term" value="C:aminoacyl-tRNA synthetase multienzyme complex"/>
    <property type="evidence" value="ECO:0007669"/>
    <property type="project" value="TreeGrafter"/>
</dbReference>
<dbReference type="GO" id="GO:0005737">
    <property type="term" value="C:cytoplasm"/>
    <property type="evidence" value="ECO:0007669"/>
    <property type="project" value="UniProtKB-SubCell"/>
</dbReference>
<dbReference type="GO" id="GO:0005524">
    <property type="term" value="F:ATP binding"/>
    <property type="evidence" value="ECO:0007669"/>
    <property type="project" value="UniProtKB-UniRule"/>
</dbReference>
<dbReference type="GO" id="GO:0004827">
    <property type="term" value="F:proline-tRNA ligase activity"/>
    <property type="evidence" value="ECO:0007669"/>
    <property type="project" value="UniProtKB-UniRule"/>
</dbReference>
<dbReference type="GO" id="GO:0006433">
    <property type="term" value="P:prolyl-tRNA aminoacylation"/>
    <property type="evidence" value="ECO:0007669"/>
    <property type="project" value="UniProtKB-UniRule"/>
</dbReference>
<dbReference type="CDD" id="cd00862">
    <property type="entry name" value="ProRS_anticodon_zinc"/>
    <property type="match status" value="1"/>
</dbReference>
<dbReference type="CDD" id="cd00778">
    <property type="entry name" value="ProRS_core_arch_euk"/>
    <property type="match status" value="1"/>
</dbReference>
<dbReference type="FunFam" id="3.30.930.10:FF:000023">
    <property type="entry name" value="Proline--tRNA ligase"/>
    <property type="match status" value="1"/>
</dbReference>
<dbReference type="Gene3D" id="3.40.50.800">
    <property type="entry name" value="Anticodon-binding domain"/>
    <property type="match status" value="1"/>
</dbReference>
<dbReference type="Gene3D" id="3.30.930.10">
    <property type="entry name" value="Bira Bifunctional Protein, Domain 2"/>
    <property type="match status" value="1"/>
</dbReference>
<dbReference type="Gene3D" id="3.30.110.30">
    <property type="entry name" value="C-terminal domain of ProRS"/>
    <property type="match status" value="1"/>
</dbReference>
<dbReference type="HAMAP" id="MF_01571">
    <property type="entry name" value="Pro_tRNA_synth_type3"/>
    <property type="match status" value="1"/>
</dbReference>
<dbReference type="InterPro" id="IPR002314">
    <property type="entry name" value="aa-tRNA-synt_IIb"/>
</dbReference>
<dbReference type="InterPro" id="IPR006195">
    <property type="entry name" value="aa-tRNA-synth_II"/>
</dbReference>
<dbReference type="InterPro" id="IPR045864">
    <property type="entry name" value="aa-tRNA-synth_II/BPL/LPL"/>
</dbReference>
<dbReference type="InterPro" id="IPR004154">
    <property type="entry name" value="Anticodon-bd"/>
</dbReference>
<dbReference type="InterPro" id="IPR036621">
    <property type="entry name" value="Anticodon-bd_dom_sf"/>
</dbReference>
<dbReference type="InterPro" id="IPR004499">
    <property type="entry name" value="Pro-tRNA-ligase_IIa_arc-type"/>
</dbReference>
<dbReference type="InterPro" id="IPR016061">
    <property type="entry name" value="Pro-tRNA_ligase_II_C"/>
</dbReference>
<dbReference type="InterPro" id="IPR017449">
    <property type="entry name" value="Pro-tRNA_synth_II"/>
</dbReference>
<dbReference type="InterPro" id="IPR033721">
    <property type="entry name" value="ProRS_core_arch_euk"/>
</dbReference>
<dbReference type="NCBIfam" id="TIGR00408">
    <property type="entry name" value="proS_fam_I"/>
    <property type="match status" value="1"/>
</dbReference>
<dbReference type="PANTHER" id="PTHR43382:SF2">
    <property type="entry name" value="BIFUNCTIONAL GLUTAMATE_PROLINE--TRNA LIGASE"/>
    <property type="match status" value="1"/>
</dbReference>
<dbReference type="PANTHER" id="PTHR43382">
    <property type="entry name" value="PROLYL-TRNA SYNTHETASE"/>
    <property type="match status" value="1"/>
</dbReference>
<dbReference type="Pfam" id="PF03129">
    <property type="entry name" value="HGTP_anticodon"/>
    <property type="match status" value="1"/>
</dbReference>
<dbReference type="Pfam" id="PF09180">
    <property type="entry name" value="ProRS-C_1"/>
    <property type="match status" value="1"/>
</dbReference>
<dbReference type="Pfam" id="PF00587">
    <property type="entry name" value="tRNA-synt_2b"/>
    <property type="match status" value="1"/>
</dbReference>
<dbReference type="SMART" id="SM00946">
    <property type="entry name" value="ProRS-C_1"/>
    <property type="match status" value="1"/>
</dbReference>
<dbReference type="SUPFAM" id="SSF64586">
    <property type="entry name" value="C-terminal domain of ProRS"/>
    <property type="match status" value="1"/>
</dbReference>
<dbReference type="SUPFAM" id="SSF52954">
    <property type="entry name" value="Class II aaRS ABD-related"/>
    <property type="match status" value="1"/>
</dbReference>
<dbReference type="SUPFAM" id="SSF55681">
    <property type="entry name" value="Class II aaRS and biotin synthetases"/>
    <property type="match status" value="1"/>
</dbReference>
<dbReference type="PROSITE" id="PS50862">
    <property type="entry name" value="AA_TRNA_LIGASE_II"/>
    <property type="match status" value="1"/>
</dbReference>
<comment type="function">
    <text evidence="1">Catalyzes the attachment of proline to tRNA(Pro) in a two-step reaction: proline is first activated by ATP to form Pro-AMP and then transferred to the acceptor end of tRNA(Pro).</text>
</comment>
<comment type="catalytic activity">
    <reaction evidence="1">
        <text>tRNA(Pro) + L-proline + ATP = L-prolyl-tRNA(Pro) + AMP + diphosphate</text>
        <dbReference type="Rhea" id="RHEA:14305"/>
        <dbReference type="Rhea" id="RHEA-COMP:9700"/>
        <dbReference type="Rhea" id="RHEA-COMP:9702"/>
        <dbReference type="ChEBI" id="CHEBI:30616"/>
        <dbReference type="ChEBI" id="CHEBI:33019"/>
        <dbReference type="ChEBI" id="CHEBI:60039"/>
        <dbReference type="ChEBI" id="CHEBI:78442"/>
        <dbReference type="ChEBI" id="CHEBI:78532"/>
        <dbReference type="ChEBI" id="CHEBI:456215"/>
        <dbReference type="EC" id="6.1.1.15"/>
    </reaction>
</comment>
<comment type="subunit">
    <text evidence="1">Homodimer.</text>
</comment>
<comment type="subcellular location">
    <subcellularLocation>
        <location evidence="1">Cytoplasm</location>
    </subcellularLocation>
</comment>
<comment type="domain">
    <text evidence="1">Consists of three domains: the N-terminal catalytic domain, the anticodon-binding domain and the C-terminal extension.</text>
</comment>
<comment type="similarity">
    <text evidence="1">Belongs to the class-II aminoacyl-tRNA synthetase family. ProS type 3 subfamily.</text>
</comment>
<protein>
    <recommendedName>
        <fullName evidence="1">Proline--tRNA ligase</fullName>
        <ecNumber evidence="1">6.1.1.15</ecNumber>
    </recommendedName>
    <alternativeName>
        <fullName evidence="1">Prolyl-tRNA synthetase</fullName>
        <shortName evidence="1">ProRS</shortName>
    </alternativeName>
</protein>
<proteinExistence type="inferred from homology"/>
<evidence type="ECO:0000255" key="1">
    <source>
        <dbReference type="HAMAP-Rule" id="MF_01571"/>
    </source>
</evidence>